<proteinExistence type="inferred from homology"/>
<reference key="1">
    <citation type="journal article" date="1998" name="Science">
        <title>Genome sequence of an obligate intracellular pathogen of humans: Chlamydia trachomatis.</title>
        <authorList>
            <person name="Stephens R.S."/>
            <person name="Kalman S."/>
            <person name="Lammel C.J."/>
            <person name="Fan J."/>
            <person name="Marathe R."/>
            <person name="Aravind L."/>
            <person name="Mitchell W.P."/>
            <person name="Olinger L."/>
            <person name="Tatusov R.L."/>
            <person name="Zhao Q."/>
            <person name="Koonin E.V."/>
            <person name="Davis R.W."/>
        </authorList>
    </citation>
    <scope>NUCLEOTIDE SEQUENCE [LARGE SCALE GENOMIC DNA]</scope>
    <source>
        <strain>ATCC VR-885 / DSM 19411 / UW-3/Cx</strain>
    </source>
</reference>
<sequence length="694" mass="78065">MGKAKNKKKFLKNRKQVLVPGTLFVHSRKGFGFVSPDQPELYPFDIFISASDLKGALDGDHVLVALPFSLRGGEKRKGVIHKVLSRGKTVLVGTIVSLINPTLAMVYVNTIGPEHPLKAELLPKRTYKLGDRLLLKTPVWKENYPSREPPPLAMLEFIGNISNAKTDFPVIKAEFSITEEFPDAVVQEASQFLQKHVTQALHSRKDLRDLLCFTIDSSSAKDFDDAVSLTYDHEGNYILGVHIADVSHYVTPNSALDREAAKRCNSIYFPGKVIPMLPSALSDNLCSLKPNVDRLAVSVFMTFSKEGFLSDYRILRSVIRSKYRMTYDEVDEIIEKKQTHPISKTILKMAELSRIFSDIREQRGCTRLVLPSFTMSLDNLQEPVALIENKQTAAHKLIEEFMLKANEVIAYHISHQGITMPFRTHEPPNEESLLVFQETAKAMGFTITQTPAQEPDYQYLLQETTAGHPLEPILHSQFVRSMKTASYSTENKGHYGLCLDYYTHFTSPIRRYVDLIVHRLLFHPLSVEEEHLEQIVRACSSQERIAAKAEGAFVNIKKARFLKKFIEEQPATLYKAFIITASPEGISFVLPEFCHEGFIPAAKLPQAYVLQTKIGLEELPEHLRPGAVISVQLASVTLLTQSIEWTLVEATTKAKAKRTSKKKKTESVTTKEKKKSPAKKKKGATKTKKGSGKN</sequence>
<organism>
    <name type="scientific">Chlamydia trachomatis serovar D (strain ATCC VR-885 / DSM 19411 / UW-3/Cx)</name>
    <dbReference type="NCBI Taxonomy" id="272561"/>
    <lineage>
        <taxon>Bacteria</taxon>
        <taxon>Pseudomonadati</taxon>
        <taxon>Chlamydiota</taxon>
        <taxon>Chlamydiia</taxon>
        <taxon>Chlamydiales</taxon>
        <taxon>Chlamydiaceae</taxon>
        <taxon>Chlamydia/Chlamydophila group</taxon>
        <taxon>Chlamydia</taxon>
    </lineage>
</organism>
<comment type="function">
    <text evidence="2">3'-5' exoribonuclease that releases 5'-nucleoside monophosphates and is involved in maturation of structured RNAs.</text>
</comment>
<comment type="catalytic activity">
    <reaction evidence="2">
        <text>Exonucleolytic cleavage in the 3'- to 5'-direction to yield nucleoside 5'-phosphates.</text>
        <dbReference type="EC" id="3.1.13.1"/>
    </reaction>
</comment>
<comment type="subcellular location">
    <subcellularLocation>
        <location evidence="2">Cytoplasm</location>
    </subcellularLocation>
</comment>
<comment type="similarity">
    <text evidence="2">Belongs to the RNR ribonuclease family. RNase R subfamily.</text>
</comment>
<protein>
    <recommendedName>
        <fullName evidence="2">Ribonuclease R</fullName>
        <shortName evidence="2">RNase R</shortName>
        <ecNumber evidence="2">3.1.13.1</ecNumber>
    </recommendedName>
    <alternativeName>
        <fullName>VacB protein homolog</fullName>
    </alternativeName>
</protein>
<accession>O84402</accession>
<name>RNR_CHLTR</name>
<keyword id="KW-0963">Cytoplasm</keyword>
<keyword id="KW-0269">Exonuclease</keyword>
<keyword id="KW-0378">Hydrolase</keyword>
<keyword id="KW-0540">Nuclease</keyword>
<keyword id="KW-1185">Reference proteome</keyword>
<keyword id="KW-0694">RNA-binding</keyword>
<evidence type="ECO:0000255" key="1"/>
<evidence type="ECO:0000255" key="2">
    <source>
        <dbReference type="HAMAP-Rule" id="MF_01895"/>
    </source>
</evidence>
<evidence type="ECO:0000256" key="3">
    <source>
        <dbReference type="SAM" id="MobiDB-lite"/>
    </source>
</evidence>
<dbReference type="EC" id="3.1.13.1" evidence="2"/>
<dbReference type="EMBL" id="AE001273">
    <property type="protein sequence ID" value="AAC67994.1"/>
    <property type="molecule type" value="Genomic_DNA"/>
</dbReference>
<dbReference type="PIR" id="H71518">
    <property type="entry name" value="H71518"/>
</dbReference>
<dbReference type="RefSeq" id="NP_219907.1">
    <property type="nucleotide sequence ID" value="NC_000117.1"/>
</dbReference>
<dbReference type="RefSeq" id="WP_010725182.1">
    <property type="nucleotide sequence ID" value="NC_000117.1"/>
</dbReference>
<dbReference type="SMR" id="O84402"/>
<dbReference type="FunCoup" id="O84402">
    <property type="interactions" value="190"/>
</dbReference>
<dbReference type="STRING" id="272561.CT_397"/>
<dbReference type="EnsemblBacteria" id="AAC67994">
    <property type="protein sequence ID" value="AAC67994"/>
    <property type="gene ID" value="CT_397"/>
</dbReference>
<dbReference type="GeneID" id="884714"/>
<dbReference type="KEGG" id="ctr:CT_397"/>
<dbReference type="PATRIC" id="fig|272561.5.peg.428"/>
<dbReference type="HOGENOM" id="CLU_002333_7_3_0"/>
<dbReference type="InParanoid" id="O84402"/>
<dbReference type="OrthoDB" id="9764149at2"/>
<dbReference type="Proteomes" id="UP000000431">
    <property type="component" value="Chromosome"/>
</dbReference>
<dbReference type="GO" id="GO:0005829">
    <property type="term" value="C:cytosol"/>
    <property type="evidence" value="ECO:0000318"/>
    <property type="project" value="GO_Central"/>
</dbReference>
<dbReference type="GO" id="GO:0008859">
    <property type="term" value="F:exoribonuclease II activity"/>
    <property type="evidence" value="ECO:0007669"/>
    <property type="project" value="UniProtKB-UniRule"/>
</dbReference>
<dbReference type="GO" id="GO:0003723">
    <property type="term" value="F:RNA binding"/>
    <property type="evidence" value="ECO:0007669"/>
    <property type="project" value="UniProtKB-UniRule"/>
</dbReference>
<dbReference type="GO" id="GO:0006402">
    <property type="term" value="P:mRNA catabolic process"/>
    <property type="evidence" value="ECO:0000318"/>
    <property type="project" value="GO_Central"/>
</dbReference>
<dbReference type="Gene3D" id="2.40.50.140">
    <property type="entry name" value="Nucleic acid-binding proteins"/>
    <property type="match status" value="1"/>
</dbReference>
<dbReference type="HAMAP" id="MF_01895">
    <property type="entry name" value="RNase_R"/>
    <property type="match status" value="1"/>
</dbReference>
<dbReference type="InterPro" id="IPR011129">
    <property type="entry name" value="CSD"/>
</dbReference>
<dbReference type="InterPro" id="IPR012340">
    <property type="entry name" value="NA-bd_OB-fold"/>
</dbReference>
<dbReference type="InterPro" id="IPR013223">
    <property type="entry name" value="RNase_B_OB_dom"/>
</dbReference>
<dbReference type="InterPro" id="IPR001900">
    <property type="entry name" value="RNase_II/R"/>
</dbReference>
<dbReference type="InterPro" id="IPR022966">
    <property type="entry name" value="RNase_II/R_CS"/>
</dbReference>
<dbReference type="InterPro" id="IPR004476">
    <property type="entry name" value="RNase_II/RNase_R"/>
</dbReference>
<dbReference type="InterPro" id="IPR011805">
    <property type="entry name" value="RNase_R"/>
</dbReference>
<dbReference type="InterPro" id="IPR050180">
    <property type="entry name" value="RNR_Ribonuclease"/>
</dbReference>
<dbReference type="NCBIfam" id="TIGR00358">
    <property type="entry name" value="3_prime_RNase"/>
    <property type="match status" value="1"/>
</dbReference>
<dbReference type="PANTHER" id="PTHR23355:SF9">
    <property type="entry name" value="DIS3-LIKE EXONUCLEASE 2"/>
    <property type="match status" value="1"/>
</dbReference>
<dbReference type="PANTHER" id="PTHR23355">
    <property type="entry name" value="RIBONUCLEASE"/>
    <property type="match status" value="1"/>
</dbReference>
<dbReference type="Pfam" id="PF08206">
    <property type="entry name" value="OB_RNB"/>
    <property type="match status" value="1"/>
</dbReference>
<dbReference type="Pfam" id="PF00773">
    <property type="entry name" value="RNB"/>
    <property type="match status" value="1"/>
</dbReference>
<dbReference type="SMART" id="SM00357">
    <property type="entry name" value="CSP"/>
    <property type="match status" value="1"/>
</dbReference>
<dbReference type="SMART" id="SM00955">
    <property type="entry name" value="RNB"/>
    <property type="match status" value="1"/>
</dbReference>
<dbReference type="SUPFAM" id="SSF50249">
    <property type="entry name" value="Nucleic acid-binding proteins"/>
    <property type="match status" value="2"/>
</dbReference>
<dbReference type="PROSITE" id="PS01175">
    <property type="entry name" value="RIBONUCLEASE_II"/>
    <property type="match status" value="1"/>
</dbReference>
<gene>
    <name evidence="2" type="primary">rnr</name>
    <name type="synonym">vacB</name>
    <name type="ordered locus">CT_397</name>
</gene>
<feature type="chain" id="PRO_0000166401" description="Ribonuclease R">
    <location>
        <begin position="1"/>
        <end position="694"/>
    </location>
</feature>
<feature type="domain" description="RNB" evidence="1">
    <location>
        <begin position="204"/>
        <end position="525"/>
    </location>
</feature>
<feature type="domain" description="S1 motif" evidence="2">
    <location>
        <begin position="571"/>
        <end position="648"/>
    </location>
</feature>
<feature type="region of interest" description="Disordered" evidence="3">
    <location>
        <begin position="652"/>
        <end position="694"/>
    </location>
</feature>
<feature type="compositionally biased region" description="Basic residues" evidence="3">
    <location>
        <begin position="654"/>
        <end position="664"/>
    </location>
</feature>
<feature type="compositionally biased region" description="Basic residues" evidence="3">
    <location>
        <begin position="672"/>
        <end position="694"/>
    </location>
</feature>